<dbReference type="EMBL" id="CR380954">
    <property type="protein sequence ID" value="CAG60136.1"/>
    <property type="molecule type" value="Genomic_DNA"/>
</dbReference>
<dbReference type="RefSeq" id="XP_447203.1">
    <property type="nucleotide sequence ID" value="XM_447203.1"/>
</dbReference>
<dbReference type="SMR" id="Q6FRE1"/>
<dbReference type="FunCoup" id="Q6FRE1">
    <property type="interactions" value="472"/>
</dbReference>
<dbReference type="STRING" id="284593.Q6FRE1"/>
<dbReference type="EnsemblFungi" id="CAGL0H09306g-T">
    <property type="protein sequence ID" value="CAGL0H09306g-T-p1"/>
    <property type="gene ID" value="CAGL0H09306g"/>
</dbReference>
<dbReference type="KEGG" id="cgr:2888718"/>
<dbReference type="CGD" id="CAL0131900">
    <property type="gene designation" value="CAGL0H09306g"/>
</dbReference>
<dbReference type="VEuPathDB" id="FungiDB:CAGL0H09306g"/>
<dbReference type="eggNOG" id="KOG1733">
    <property type="taxonomic scope" value="Eukaryota"/>
</dbReference>
<dbReference type="HOGENOM" id="CLU_141397_0_1_1"/>
<dbReference type="InParanoid" id="Q6FRE1"/>
<dbReference type="OMA" id="RCISQCM"/>
<dbReference type="Proteomes" id="UP000002428">
    <property type="component" value="Chromosome H"/>
</dbReference>
<dbReference type="GO" id="GO:0005743">
    <property type="term" value="C:mitochondrial inner membrane"/>
    <property type="evidence" value="ECO:0007669"/>
    <property type="project" value="UniProtKB-SubCell"/>
</dbReference>
<dbReference type="GO" id="GO:0042719">
    <property type="term" value="C:mitochondrial intermembrane space protein transporter complex"/>
    <property type="evidence" value="ECO:0007669"/>
    <property type="project" value="EnsemblFungi"/>
</dbReference>
<dbReference type="GO" id="GO:0046872">
    <property type="term" value="F:metal ion binding"/>
    <property type="evidence" value="ECO:0007669"/>
    <property type="project" value="UniProtKB-KW"/>
</dbReference>
<dbReference type="GO" id="GO:0140318">
    <property type="term" value="F:protein transporter activity"/>
    <property type="evidence" value="ECO:0007669"/>
    <property type="project" value="EnsemblFungi"/>
</dbReference>
<dbReference type="GO" id="GO:0045039">
    <property type="term" value="P:protein insertion into mitochondrial inner membrane"/>
    <property type="evidence" value="ECO:0007669"/>
    <property type="project" value="EnsemblFungi"/>
</dbReference>
<dbReference type="FunFam" id="1.10.287.810:FF:000001">
    <property type="entry name" value="mitochondrial import inner membrane translocase subunit TIM13"/>
    <property type="match status" value="1"/>
</dbReference>
<dbReference type="Gene3D" id="1.10.287.810">
    <property type="entry name" value="Mitochondrial import inner membrane translocase subunit tim13 like domains"/>
    <property type="match status" value="1"/>
</dbReference>
<dbReference type="InterPro" id="IPR004217">
    <property type="entry name" value="Tim10-like"/>
</dbReference>
<dbReference type="InterPro" id="IPR035427">
    <property type="entry name" value="Tim10-like_dom_sf"/>
</dbReference>
<dbReference type="Pfam" id="PF02953">
    <property type="entry name" value="zf-Tim10_DDP"/>
    <property type="match status" value="1"/>
</dbReference>
<dbReference type="SUPFAM" id="SSF144122">
    <property type="entry name" value="Tim10-like"/>
    <property type="match status" value="1"/>
</dbReference>
<sequence length="95" mass="10342">MALFGGSSSQAPASATDNKVQAFKQQIAQEIAVANATDLVNKVSENCFEKCLQSPYKDGNEGCVDQCLAKYMRSWNVISKTYINRIQDASTTGEI</sequence>
<proteinExistence type="inferred from homology"/>
<accession>Q6FRE1</accession>
<gene>
    <name type="primary">TIM13</name>
    <name type="ordered locus">CAGL0H09306g</name>
</gene>
<organism>
    <name type="scientific">Candida glabrata (strain ATCC 2001 / BCRC 20586 / JCM 3761 / NBRC 0622 / NRRL Y-65 / CBS 138)</name>
    <name type="common">Yeast</name>
    <name type="synonym">Nakaseomyces glabratus</name>
    <dbReference type="NCBI Taxonomy" id="284593"/>
    <lineage>
        <taxon>Eukaryota</taxon>
        <taxon>Fungi</taxon>
        <taxon>Dikarya</taxon>
        <taxon>Ascomycota</taxon>
        <taxon>Saccharomycotina</taxon>
        <taxon>Saccharomycetes</taxon>
        <taxon>Saccharomycetales</taxon>
        <taxon>Saccharomycetaceae</taxon>
        <taxon>Nakaseomyces</taxon>
    </lineage>
</organism>
<name>TIM13_CANGA</name>
<feature type="chain" id="PRO_0000228072" description="Mitochondrial import inner membrane translocase subunit TIM13">
    <location>
        <begin position="1"/>
        <end position="95"/>
    </location>
</feature>
<feature type="short sequence motif" description="Twin CX3C motif">
    <location>
        <begin position="47"/>
        <end position="67"/>
    </location>
</feature>
<feature type="disulfide bond" evidence="1">
    <location>
        <begin position="47"/>
        <end position="67"/>
    </location>
</feature>
<feature type="disulfide bond" evidence="1">
    <location>
        <begin position="51"/>
        <end position="63"/>
    </location>
</feature>
<evidence type="ECO:0000250" key="1"/>
<evidence type="ECO:0000305" key="2"/>
<protein>
    <recommendedName>
        <fullName>Mitochondrial import inner membrane translocase subunit TIM13</fullName>
    </recommendedName>
</protein>
<reference key="1">
    <citation type="journal article" date="2004" name="Nature">
        <title>Genome evolution in yeasts.</title>
        <authorList>
            <person name="Dujon B."/>
            <person name="Sherman D."/>
            <person name="Fischer G."/>
            <person name="Durrens P."/>
            <person name="Casaregola S."/>
            <person name="Lafontaine I."/>
            <person name="de Montigny J."/>
            <person name="Marck C."/>
            <person name="Neuveglise C."/>
            <person name="Talla E."/>
            <person name="Goffard N."/>
            <person name="Frangeul L."/>
            <person name="Aigle M."/>
            <person name="Anthouard V."/>
            <person name="Babour A."/>
            <person name="Barbe V."/>
            <person name="Barnay S."/>
            <person name="Blanchin S."/>
            <person name="Beckerich J.-M."/>
            <person name="Beyne E."/>
            <person name="Bleykasten C."/>
            <person name="Boisrame A."/>
            <person name="Boyer J."/>
            <person name="Cattolico L."/>
            <person name="Confanioleri F."/>
            <person name="de Daruvar A."/>
            <person name="Despons L."/>
            <person name="Fabre E."/>
            <person name="Fairhead C."/>
            <person name="Ferry-Dumazet H."/>
            <person name="Groppi A."/>
            <person name="Hantraye F."/>
            <person name="Hennequin C."/>
            <person name="Jauniaux N."/>
            <person name="Joyet P."/>
            <person name="Kachouri R."/>
            <person name="Kerrest A."/>
            <person name="Koszul R."/>
            <person name="Lemaire M."/>
            <person name="Lesur I."/>
            <person name="Ma L."/>
            <person name="Muller H."/>
            <person name="Nicaud J.-M."/>
            <person name="Nikolski M."/>
            <person name="Oztas S."/>
            <person name="Ozier-Kalogeropoulos O."/>
            <person name="Pellenz S."/>
            <person name="Potier S."/>
            <person name="Richard G.-F."/>
            <person name="Straub M.-L."/>
            <person name="Suleau A."/>
            <person name="Swennen D."/>
            <person name="Tekaia F."/>
            <person name="Wesolowski-Louvel M."/>
            <person name="Westhof E."/>
            <person name="Wirth B."/>
            <person name="Zeniou-Meyer M."/>
            <person name="Zivanovic Y."/>
            <person name="Bolotin-Fukuhara M."/>
            <person name="Thierry A."/>
            <person name="Bouchier C."/>
            <person name="Caudron B."/>
            <person name="Scarpelli C."/>
            <person name="Gaillardin C."/>
            <person name="Weissenbach J."/>
            <person name="Wincker P."/>
            <person name="Souciet J.-L."/>
        </authorList>
    </citation>
    <scope>NUCLEOTIDE SEQUENCE [LARGE SCALE GENOMIC DNA]</scope>
    <source>
        <strain>ATCC 2001 / BCRC 20586 / JCM 3761 / NBRC 0622 / NRRL Y-65 / CBS 138</strain>
    </source>
</reference>
<comment type="function">
    <text evidence="1">Mitochondrial intermembrane chaperone that participates in the import and insertion of some multi-pass transmembrane proteins into the mitochondrial inner membrane. Also required for the transfer of beta-barrel precursors from the TOM complex to the sorting and assembly machinery (SAM complex) of the outer membrane. Acts as a chaperone-like protein that protects the hydrophobic precursors from aggregation and guide them through the mitochondrial intermembrane space. The TIM8-TIM13 complex is non essential and only mediates the import of few proteins, while the predominant TIM9-TIM10 70 kDa complex is crucial and mediates the import of much more proteins (By similarity).</text>
</comment>
<comment type="subunit">
    <text evidence="1">Heterohexamer; composed of 3 copies of TIM8 and 3 copies of TIM13, named soluble 70 kDa complex. Associates with the TIM22 complex, whose core is composed of TIM22 and TIM54. Interacts with the transmembrane regions of multi-pass transmembrane proteins in transit (By similarity).</text>
</comment>
<comment type="subcellular location">
    <subcellularLocation>
        <location evidence="1">Mitochondrion inner membrane</location>
        <topology evidence="1">Peripheral membrane protein</topology>
        <orientation evidence="1">Intermembrane side</orientation>
    </subcellularLocation>
</comment>
<comment type="domain">
    <text evidence="1">The twin CX3C motif contains 4 conserved Cys residues that form 2 disulfide bonds in the mitochondrial intermembrane space. However, during the transit of TIM13 from cytoplasm into mitochondrion, the Cys residues probably coordinate zinc, thereby preventing folding and allowing its transfer across mitochondrial outer membrane (By similarity).</text>
</comment>
<comment type="similarity">
    <text evidence="2">Belongs to the small Tim family.</text>
</comment>
<keyword id="KW-0143">Chaperone</keyword>
<keyword id="KW-1015">Disulfide bond</keyword>
<keyword id="KW-0472">Membrane</keyword>
<keyword id="KW-0479">Metal-binding</keyword>
<keyword id="KW-0496">Mitochondrion</keyword>
<keyword id="KW-0999">Mitochondrion inner membrane</keyword>
<keyword id="KW-0653">Protein transport</keyword>
<keyword id="KW-1185">Reference proteome</keyword>
<keyword id="KW-0811">Translocation</keyword>
<keyword id="KW-0813">Transport</keyword>
<keyword id="KW-0862">Zinc</keyword>